<accession>Q8TIB0</accession>
<evidence type="ECO:0000305" key="1"/>
<feature type="chain" id="PRO_0000147575" description="UPF0251 protein MA_4245">
    <location>
        <begin position="1"/>
        <end position="112"/>
    </location>
</feature>
<name>Y4245_METAC</name>
<sequence length="112" mass="12560">MKKCRGRPKCPRRVEQTPDITYFKPRGVPLSDLEVVSLTVEELEALRLVDIEGLRQEDAASRVGISRRAFWEDLKSARMKVAIALSKGKAIEIKGGNYIRAESSDINEDADT</sequence>
<reference key="1">
    <citation type="journal article" date="2002" name="Genome Res.">
        <title>The genome of Methanosarcina acetivorans reveals extensive metabolic and physiological diversity.</title>
        <authorList>
            <person name="Galagan J.E."/>
            <person name="Nusbaum C."/>
            <person name="Roy A."/>
            <person name="Endrizzi M.G."/>
            <person name="Macdonald P."/>
            <person name="FitzHugh W."/>
            <person name="Calvo S."/>
            <person name="Engels R."/>
            <person name="Smirnov S."/>
            <person name="Atnoor D."/>
            <person name="Brown A."/>
            <person name="Allen N."/>
            <person name="Naylor J."/>
            <person name="Stange-Thomann N."/>
            <person name="DeArellano K."/>
            <person name="Johnson R."/>
            <person name="Linton L."/>
            <person name="McEwan P."/>
            <person name="McKernan K."/>
            <person name="Talamas J."/>
            <person name="Tirrell A."/>
            <person name="Ye W."/>
            <person name="Zimmer A."/>
            <person name="Barber R.D."/>
            <person name="Cann I."/>
            <person name="Graham D.E."/>
            <person name="Grahame D.A."/>
            <person name="Guss A.M."/>
            <person name="Hedderich R."/>
            <person name="Ingram-Smith C."/>
            <person name="Kuettner H.C."/>
            <person name="Krzycki J.A."/>
            <person name="Leigh J.A."/>
            <person name="Li W."/>
            <person name="Liu J."/>
            <person name="Mukhopadhyay B."/>
            <person name="Reeve J.N."/>
            <person name="Smith K."/>
            <person name="Springer T.A."/>
            <person name="Umayam L.A."/>
            <person name="White O."/>
            <person name="White R.H."/>
            <person name="de Macario E.C."/>
            <person name="Ferry J.G."/>
            <person name="Jarrell K.F."/>
            <person name="Jing H."/>
            <person name="Macario A.J.L."/>
            <person name="Paulsen I.T."/>
            <person name="Pritchett M."/>
            <person name="Sowers K.R."/>
            <person name="Swanson R.V."/>
            <person name="Zinder S.H."/>
            <person name="Lander E."/>
            <person name="Metcalf W.W."/>
            <person name="Birren B."/>
        </authorList>
    </citation>
    <scope>NUCLEOTIDE SEQUENCE [LARGE SCALE GENOMIC DNA]</scope>
    <source>
        <strain>ATCC 35395 / DSM 2834 / JCM 12185 / C2A</strain>
    </source>
</reference>
<organism>
    <name type="scientific">Methanosarcina acetivorans (strain ATCC 35395 / DSM 2834 / JCM 12185 / C2A)</name>
    <dbReference type="NCBI Taxonomy" id="188937"/>
    <lineage>
        <taxon>Archaea</taxon>
        <taxon>Methanobacteriati</taxon>
        <taxon>Methanobacteriota</taxon>
        <taxon>Stenosarchaea group</taxon>
        <taxon>Methanomicrobia</taxon>
        <taxon>Methanosarcinales</taxon>
        <taxon>Methanosarcinaceae</taxon>
        <taxon>Methanosarcina</taxon>
    </lineage>
</organism>
<protein>
    <recommendedName>
        <fullName>UPF0251 protein MA_4245</fullName>
    </recommendedName>
</protein>
<keyword id="KW-1185">Reference proteome</keyword>
<gene>
    <name type="ordered locus">MA_4245</name>
</gene>
<dbReference type="EMBL" id="AE010299">
    <property type="protein sequence ID" value="AAM07590.1"/>
    <property type="molecule type" value="Genomic_DNA"/>
</dbReference>
<dbReference type="RefSeq" id="WP_011024127.1">
    <property type="nucleotide sequence ID" value="NC_003552.1"/>
</dbReference>
<dbReference type="STRING" id="188937.MA_4245"/>
<dbReference type="EnsemblBacteria" id="AAM07590">
    <property type="protein sequence ID" value="AAM07590"/>
    <property type="gene ID" value="MA_4245"/>
</dbReference>
<dbReference type="GeneID" id="1476139"/>
<dbReference type="KEGG" id="mac:MA_4245"/>
<dbReference type="HOGENOM" id="CLU_094511_2_0_2"/>
<dbReference type="InParanoid" id="Q8TIB0"/>
<dbReference type="OrthoDB" id="74471at2157"/>
<dbReference type="PhylomeDB" id="Q8TIB0"/>
<dbReference type="Proteomes" id="UP000002487">
    <property type="component" value="Chromosome"/>
</dbReference>
<dbReference type="Gene3D" id="1.10.10.10">
    <property type="entry name" value="Winged helix-like DNA-binding domain superfamily/Winged helix DNA-binding domain"/>
    <property type="match status" value="1"/>
</dbReference>
<dbReference type="HAMAP" id="MF_00674">
    <property type="entry name" value="UPF0251"/>
    <property type="match status" value="1"/>
</dbReference>
<dbReference type="InterPro" id="IPR002852">
    <property type="entry name" value="UPF0251"/>
</dbReference>
<dbReference type="InterPro" id="IPR036388">
    <property type="entry name" value="WH-like_DNA-bd_sf"/>
</dbReference>
<dbReference type="PANTHER" id="PTHR37478">
    <property type="match status" value="1"/>
</dbReference>
<dbReference type="PANTHER" id="PTHR37478:SF2">
    <property type="entry name" value="UPF0251 PROTEIN TK0562"/>
    <property type="match status" value="1"/>
</dbReference>
<dbReference type="Pfam" id="PF02001">
    <property type="entry name" value="DUF134"/>
    <property type="match status" value="1"/>
</dbReference>
<proteinExistence type="inferred from homology"/>
<comment type="similarity">
    <text evidence="1">Belongs to the UPF0251 family.</text>
</comment>